<organism>
    <name type="scientific">Baumannia cicadellinicola subsp. Homalodisca coagulata</name>
    <dbReference type="NCBI Taxonomy" id="374463"/>
    <lineage>
        <taxon>Bacteria</taxon>
        <taxon>Pseudomonadati</taxon>
        <taxon>Pseudomonadota</taxon>
        <taxon>Gammaproteobacteria</taxon>
        <taxon>Candidatus Palibaumannia</taxon>
    </lineage>
</organism>
<accession>Q1LSZ6</accession>
<proteinExistence type="inferred from homology"/>
<comment type="similarity">
    <text evidence="1">Belongs to the UPF0301 (AlgH) family.</text>
</comment>
<evidence type="ECO:0000255" key="1">
    <source>
        <dbReference type="HAMAP-Rule" id="MF_00758"/>
    </source>
</evidence>
<feature type="chain" id="PRO_0000258801" description="UPF0301 protein BCI_0481">
    <location>
        <begin position="1"/>
        <end position="187"/>
    </location>
</feature>
<name>Y481_BAUCH</name>
<reference key="1">
    <citation type="journal article" date="2006" name="PLoS Biol.">
        <title>Metabolic complementarity and genomics of the dual bacterial symbiosis of sharpshooters.</title>
        <authorList>
            <person name="Wu D."/>
            <person name="Daugherty S.C."/>
            <person name="Van Aken S.E."/>
            <person name="Pai G.H."/>
            <person name="Watkins K.L."/>
            <person name="Khouri H."/>
            <person name="Tallon L.J."/>
            <person name="Zaborsky J.M."/>
            <person name="Dunbar H.E."/>
            <person name="Tran P.L."/>
            <person name="Moran N.A."/>
            <person name="Eisen J.A."/>
        </authorList>
    </citation>
    <scope>NUCLEOTIDE SEQUENCE [LARGE SCALE GENOMIC DNA]</scope>
</reference>
<gene>
    <name type="ordered locus">BCI_0481</name>
</gene>
<keyword id="KW-1185">Reference proteome</keyword>
<sequence>MNLQHHFLIAMPTLTDPLFKQSVVYICTHNHEGAMGIVINKPVEQFTVASVLHKLKIIPIVDHASVQLNQPVFLGGPLADDRGFIIHTPKDGFGASIGISPQTMITTSKDVLETLGTHNQPDDILVALGYSGWEEGQLEHELRANTWLTIPANNQILFATPVSARWQAAAKILGININNIVNQIGHA</sequence>
<dbReference type="EMBL" id="CP000238">
    <property type="protein sequence ID" value="ABF14175.1"/>
    <property type="molecule type" value="Genomic_DNA"/>
</dbReference>
<dbReference type="RefSeq" id="WP_011520651.1">
    <property type="nucleotide sequence ID" value="NC_007984.1"/>
</dbReference>
<dbReference type="SMR" id="Q1LSZ6"/>
<dbReference type="STRING" id="374463.BCI_0481"/>
<dbReference type="KEGG" id="bci:BCI_0481"/>
<dbReference type="HOGENOM" id="CLU_057596_1_0_6"/>
<dbReference type="OrthoDB" id="9807486at2"/>
<dbReference type="Proteomes" id="UP000002427">
    <property type="component" value="Chromosome"/>
</dbReference>
<dbReference type="GO" id="GO:0005829">
    <property type="term" value="C:cytosol"/>
    <property type="evidence" value="ECO:0007669"/>
    <property type="project" value="TreeGrafter"/>
</dbReference>
<dbReference type="Gene3D" id="3.40.1740.10">
    <property type="entry name" value="VC0467-like"/>
    <property type="match status" value="1"/>
</dbReference>
<dbReference type="Gene3D" id="3.30.70.1300">
    <property type="entry name" value="VC0467-like domains"/>
    <property type="match status" value="1"/>
</dbReference>
<dbReference type="HAMAP" id="MF_00758">
    <property type="entry name" value="UPF0301"/>
    <property type="match status" value="1"/>
</dbReference>
<dbReference type="InterPro" id="IPR003774">
    <property type="entry name" value="AlgH-like"/>
</dbReference>
<dbReference type="NCBIfam" id="NF001266">
    <property type="entry name" value="PRK00228.1-1"/>
    <property type="match status" value="1"/>
</dbReference>
<dbReference type="PANTHER" id="PTHR30327">
    <property type="entry name" value="UNCHARACTERIZED PROTEIN YQGE"/>
    <property type="match status" value="1"/>
</dbReference>
<dbReference type="PANTHER" id="PTHR30327:SF1">
    <property type="entry name" value="UPF0301 PROTEIN YQGE"/>
    <property type="match status" value="1"/>
</dbReference>
<dbReference type="Pfam" id="PF02622">
    <property type="entry name" value="DUF179"/>
    <property type="match status" value="1"/>
</dbReference>
<dbReference type="SUPFAM" id="SSF143456">
    <property type="entry name" value="VC0467-like"/>
    <property type="match status" value="1"/>
</dbReference>
<protein>
    <recommendedName>
        <fullName evidence="1">UPF0301 protein BCI_0481</fullName>
    </recommendedName>
</protein>